<dbReference type="EMBL" id="CP001392">
    <property type="protein sequence ID" value="ACM31871.1"/>
    <property type="molecule type" value="Genomic_DNA"/>
</dbReference>
<dbReference type="RefSeq" id="WP_011803857.1">
    <property type="nucleotide sequence ID" value="NC_011992.1"/>
</dbReference>
<dbReference type="SMR" id="B9MBV1"/>
<dbReference type="GeneID" id="84683099"/>
<dbReference type="KEGG" id="dia:Dtpsy_0387"/>
<dbReference type="eggNOG" id="COG0096">
    <property type="taxonomic scope" value="Bacteria"/>
</dbReference>
<dbReference type="HOGENOM" id="CLU_098428_0_0_4"/>
<dbReference type="Proteomes" id="UP000000450">
    <property type="component" value="Chromosome"/>
</dbReference>
<dbReference type="GO" id="GO:1990904">
    <property type="term" value="C:ribonucleoprotein complex"/>
    <property type="evidence" value="ECO:0007669"/>
    <property type="project" value="UniProtKB-KW"/>
</dbReference>
<dbReference type="GO" id="GO:0005840">
    <property type="term" value="C:ribosome"/>
    <property type="evidence" value="ECO:0007669"/>
    <property type="project" value="UniProtKB-KW"/>
</dbReference>
<dbReference type="GO" id="GO:0019843">
    <property type="term" value="F:rRNA binding"/>
    <property type="evidence" value="ECO:0007669"/>
    <property type="project" value="UniProtKB-UniRule"/>
</dbReference>
<dbReference type="GO" id="GO:0003735">
    <property type="term" value="F:structural constituent of ribosome"/>
    <property type="evidence" value="ECO:0007669"/>
    <property type="project" value="InterPro"/>
</dbReference>
<dbReference type="GO" id="GO:0006412">
    <property type="term" value="P:translation"/>
    <property type="evidence" value="ECO:0007669"/>
    <property type="project" value="UniProtKB-UniRule"/>
</dbReference>
<dbReference type="FunFam" id="3.30.1370.30:FF:000002">
    <property type="entry name" value="30S ribosomal protein S8"/>
    <property type="match status" value="1"/>
</dbReference>
<dbReference type="FunFam" id="3.30.1490.10:FF:000001">
    <property type="entry name" value="30S ribosomal protein S8"/>
    <property type="match status" value="1"/>
</dbReference>
<dbReference type="Gene3D" id="3.30.1370.30">
    <property type="match status" value="1"/>
</dbReference>
<dbReference type="Gene3D" id="3.30.1490.10">
    <property type="match status" value="1"/>
</dbReference>
<dbReference type="HAMAP" id="MF_01302_B">
    <property type="entry name" value="Ribosomal_uS8_B"/>
    <property type="match status" value="1"/>
</dbReference>
<dbReference type="InterPro" id="IPR000630">
    <property type="entry name" value="Ribosomal_uS8"/>
</dbReference>
<dbReference type="InterPro" id="IPR047863">
    <property type="entry name" value="Ribosomal_uS8_CS"/>
</dbReference>
<dbReference type="InterPro" id="IPR035987">
    <property type="entry name" value="Ribosomal_uS8_sf"/>
</dbReference>
<dbReference type="NCBIfam" id="NF001109">
    <property type="entry name" value="PRK00136.1"/>
    <property type="match status" value="1"/>
</dbReference>
<dbReference type="PANTHER" id="PTHR11758">
    <property type="entry name" value="40S RIBOSOMAL PROTEIN S15A"/>
    <property type="match status" value="1"/>
</dbReference>
<dbReference type="Pfam" id="PF00410">
    <property type="entry name" value="Ribosomal_S8"/>
    <property type="match status" value="1"/>
</dbReference>
<dbReference type="SUPFAM" id="SSF56047">
    <property type="entry name" value="Ribosomal protein S8"/>
    <property type="match status" value="1"/>
</dbReference>
<dbReference type="PROSITE" id="PS00053">
    <property type="entry name" value="RIBOSOMAL_S8"/>
    <property type="match status" value="1"/>
</dbReference>
<feature type="chain" id="PRO_1000165329" description="Small ribosomal subunit protein uS8">
    <location>
        <begin position="1"/>
        <end position="131"/>
    </location>
</feature>
<proteinExistence type="inferred from homology"/>
<organism>
    <name type="scientific">Acidovorax ebreus (strain TPSY)</name>
    <name type="common">Diaphorobacter sp. (strain TPSY)</name>
    <dbReference type="NCBI Taxonomy" id="535289"/>
    <lineage>
        <taxon>Bacteria</taxon>
        <taxon>Pseudomonadati</taxon>
        <taxon>Pseudomonadota</taxon>
        <taxon>Betaproteobacteria</taxon>
        <taxon>Burkholderiales</taxon>
        <taxon>Comamonadaceae</taxon>
        <taxon>Diaphorobacter</taxon>
    </lineage>
</organism>
<keyword id="KW-1185">Reference proteome</keyword>
<keyword id="KW-0687">Ribonucleoprotein</keyword>
<keyword id="KW-0689">Ribosomal protein</keyword>
<keyword id="KW-0694">RNA-binding</keyword>
<keyword id="KW-0699">rRNA-binding</keyword>
<name>RS8_ACIET</name>
<protein>
    <recommendedName>
        <fullName evidence="1">Small ribosomal subunit protein uS8</fullName>
    </recommendedName>
    <alternativeName>
        <fullName evidence="2">30S ribosomal protein S8</fullName>
    </alternativeName>
</protein>
<comment type="function">
    <text evidence="1">One of the primary rRNA binding proteins, it binds directly to 16S rRNA central domain where it helps coordinate assembly of the platform of the 30S subunit.</text>
</comment>
<comment type="subunit">
    <text evidence="1">Part of the 30S ribosomal subunit. Contacts proteins S5 and S12.</text>
</comment>
<comment type="similarity">
    <text evidence="1">Belongs to the universal ribosomal protein uS8 family.</text>
</comment>
<evidence type="ECO:0000255" key="1">
    <source>
        <dbReference type="HAMAP-Rule" id="MF_01302"/>
    </source>
</evidence>
<evidence type="ECO:0000305" key="2"/>
<gene>
    <name evidence="1" type="primary">rpsH</name>
    <name type="ordered locus">Dtpsy_0387</name>
</gene>
<sequence>MSMSDPIADLLTRIRNAQMVSKATVSVPSSKVKVAIAQVLKDEGYIDGFEVKSESGKTELEITLKYYAGRPVIERIERVSRPGLRVYKGCGSIPQVMNGLGVAIVTTPKGVMTDRKARATGVGGEVLCYVA</sequence>
<reference key="1">
    <citation type="submission" date="2009-01" db="EMBL/GenBank/DDBJ databases">
        <title>Complete sequence of Diaphorobacter sp. TPSY.</title>
        <authorList>
            <consortium name="US DOE Joint Genome Institute"/>
            <person name="Lucas S."/>
            <person name="Copeland A."/>
            <person name="Lapidus A."/>
            <person name="Glavina del Rio T."/>
            <person name="Tice H."/>
            <person name="Bruce D."/>
            <person name="Goodwin L."/>
            <person name="Pitluck S."/>
            <person name="Chertkov O."/>
            <person name="Brettin T."/>
            <person name="Detter J.C."/>
            <person name="Han C."/>
            <person name="Larimer F."/>
            <person name="Land M."/>
            <person name="Hauser L."/>
            <person name="Kyrpides N."/>
            <person name="Mikhailova N."/>
            <person name="Coates J.D."/>
        </authorList>
    </citation>
    <scope>NUCLEOTIDE SEQUENCE [LARGE SCALE GENOMIC DNA]</scope>
    <source>
        <strain>TPSY</strain>
    </source>
</reference>
<accession>B9MBV1</accession>